<name>IDH3B_MACFA</name>
<accession>Q28479</accession>
<accession>Q4R4Q5</accession>
<keyword id="KW-0007">Acetylation</keyword>
<keyword id="KW-0496">Mitochondrion</keyword>
<keyword id="KW-1185">Reference proteome</keyword>
<keyword id="KW-0809">Transit peptide</keyword>
<keyword id="KW-0816">Tricarboxylic acid cycle</keyword>
<sequence length="385" mass="42255">MAALSGVRWLTRALVSAGNPGAWRGLSTSAAAHAASRSQAEDVRVEGSFPVTMLPGDGVGPELMHAVKEVFKAAAVPVEFQEHHLSEVQNMASEEKLEQVLSSMKENKVAIIGKIHTPMEYKGELASYDMRLRRKLDLFANVVHVKSLPGYMTRHNNLDLVIIREQTEGEYSSLEHESARGVIECLKIVTRAKSQRIAKFAFDYATKKGRSKVTAVHKANIMKLGDGLFLQCCEEVAELYPKIKFETMIIDNCCMQLVQNPYQFDVLVMPNLYGNIIDNLAAGLVGGAGVVPGESYSAEYAVFETGARHPFAQAVGRNIANPTAMLLSASNMLRHLNLEYHSNMIADAVKKVIKVGKVRTRDMGGYSTTTDFIKSVIGHLHPHGS</sequence>
<gene>
    <name type="primary">IDH3B</name>
    <name type="ORF">QnpA-21101</name>
</gene>
<feature type="transit peptide" description="Mitochondrion" evidence="1">
    <location>
        <begin position="1"/>
        <end position="34"/>
    </location>
</feature>
<feature type="chain" id="PRO_0000014445" description="Isocitrate dehydrogenase [NAD] subunit beta, mitochondrial">
    <location>
        <begin position="35"/>
        <end position="385"/>
    </location>
</feature>
<feature type="modified residue" description="N6-acetyllysine" evidence="2">
    <location>
        <position position="199"/>
    </location>
</feature>
<feature type="sequence conflict" description="In Ref. 2; CAA57954." evidence="3" ref="2">
    <original>R</original>
    <variation>S</variation>
    <location>
        <position position="361"/>
    </location>
</feature>
<feature type="sequence conflict" description="In Ref. 2; CAA57954." evidence="3" ref="2">
    <original>STTTDFIKSVIGHLHPHGS</original>
    <variation>ATCHDFTEAVIAALPHP</variation>
    <location>
        <begin position="367"/>
        <end position="385"/>
    </location>
</feature>
<organism>
    <name type="scientific">Macaca fascicularis</name>
    <name type="common">Crab-eating macaque</name>
    <name type="synonym">Cynomolgus monkey</name>
    <dbReference type="NCBI Taxonomy" id="9541"/>
    <lineage>
        <taxon>Eukaryota</taxon>
        <taxon>Metazoa</taxon>
        <taxon>Chordata</taxon>
        <taxon>Craniata</taxon>
        <taxon>Vertebrata</taxon>
        <taxon>Euteleostomi</taxon>
        <taxon>Mammalia</taxon>
        <taxon>Eutheria</taxon>
        <taxon>Euarchontoglires</taxon>
        <taxon>Primates</taxon>
        <taxon>Haplorrhini</taxon>
        <taxon>Catarrhini</taxon>
        <taxon>Cercopithecidae</taxon>
        <taxon>Cercopithecinae</taxon>
        <taxon>Macaca</taxon>
    </lineage>
</organism>
<comment type="function">
    <text evidence="2">Plays a structural role to facilitate the assembly and ensure the full activity of the enzyme catalyzing the decarboxylation of isocitrate (ICT) into alpha-ketoglutarate. The heterodimer composed of the alpha (IDH3A) and beta (IDH3B) subunits and the heterodimer composed of the alpha (IDH3A) and gamma (IDH3G) subunits, have considerable basal activity but the full activity of the heterotetramer (containing two subunits of IDH3A, one of IDH3B and one of IDH3G) requires the assembly and cooperative function of both heterodimers.</text>
</comment>
<comment type="activity regulation">
    <text evidence="2">The heterotetramer and the heterodimer composed of IDH3A and IDH3G subunits can be allosterically activated by citrate (CIT) or/and ADP, and the two activators can act independently or synergistically. The heterodimer composed of IDH3A and IDH3B subunits cannot be allosterically regulated and the allosteric regulation of the heterotetramer is through the IDH3G subunit and not the IDH3B subunit. The IDH3G subunit contains the allosteric site which consists of a CIT-binding site and an ADP-binding site, and the binding of CIT and ADP causes conformational changes at the allosteric site which are transmitted to the active site in the catalytic subunit (IDH3A) through a cascade of conformational changes at the heterodimer interface, leading to stabilization of the isocitrate-binding at the active site and thus activation of the enzyme. ATP can activate the heterotetramer and the heterodimer composed of IDH3A and IDH3G subunits at low concentrations but inhibits their activities at high concentrations, whereas ATP exhibits only inhibitory effect on the heterodimer composed of IDH3A and IDH3B subunits.</text>
</comment>
<comment type="subunit">
    <text evidence="2">Heterooligomer of subunits alpha (IDH3A), beta (IDH3B), and gamma (IDH3G) in the apparent ratio of 2:1:1. The heterodimer containing one IDH3A and one IDH3B subunit and the heterodimer containing one IDH3A and one IDH3G subunit assemble into a heterotetramer (which contains two subunits of IDH3A, one of IDH3B and one of IDH3G) and further into the heterooctamer.</text>
</comment>
<comment type="subcellular location">
    <subcellularLocation>
        <location>Mitochondrion</location>
    </subcellularLocation>
</comment>
<comment type="similarity">
    <text evidence="3">Belongs to the isocitrate and isopropylmalate dehydrogenases family.</text>
</comment>
<reference key="1">
    <citation type="submission" date="2005-06" db="EMBL/GenBank/DDBJ databases">
        <title>DNA sequences of macaque genes expressed in brain or testis and its evolutionary implications.</title>
        <authorList>
            <consortium name="International consortium for macaque cDNA sequencing and analysis"/>
        </authorList>
    </citation>
    <scope>NUCLEOTIDE SEQUENCE [LARGE SCALE MRNA]</scope>
    <source>
        <tissue>Parietal cortex</tissue>
    </source>
</reference>
<reference key="2">
    <citation type="journal article" date="1995" name="Biochem. J.">
        <title>Molecular cloning and deduced amino acid sequences of the alpha- and beta-subunits of mammalian NAD(+)-isocitrate dehydrogenase.</title>
        <authorList>
            <person name="Nichols B.J."/>
            <person name="Perry A.C.F."/>
            <person name="Hall L."/>
            <person name="Denton R.M."/>
        </authorList>
    </citation>
    <scope>NUCLEOTIDE SEQUENCE [MRNA] OF 3-385</scope>
    <source>
        <tissue>Testis</tissue>
    </source>
</reference>
<proteinExistence type="evidence at transcript level"/>
<protein>
    <recommendedName>
        <fullName>Isocitrate dehydrogenase [NAD] subunit beta, mitochondrial</fullName>
    </recommendedName>
    <alternativeName>
        <fullName>Isocitric dehydrogenase subunit beta</fullName>
    </alternativeName>
    <alternativeName>
        <fullName>NAD(+)-specific ICDH subunit beta</fullName>
    </alternativeName>
</protein>
<dbReference type="EMBL" id="AB169839">
    <property type="protein sequence ID" value="BAE01920.1"/>
    <property type="molecule type" value="mRNA"/>
</dbReference>
<dbReference type="EMBL" id="X82632">
    <property type="protein sequence ID" value="CAA57954.1"/>
    <property type="molecule type" value="mRNA"/>
</dbReference>
<dbReference type="PIR" id="S58663">
    <property type="entry name" value="S58663"/>
</dbReference>
<dbReference type="RefSeq" id="NP_001274565.1">
    <property type="nucleotide sequence ID" value="NM_001287636.1"/>
</dbReference>
<dbReference type="RefSeq" id="XP_005568569.1">
    <property type="nucleotide sequence ID" value="XM_005568512.1"/>
</dbReference>
<dbReference type="RefSeq" id="XP_045218576.1">
    <property type="nucleotide sequence ID" value="XM_045362641.2"/>
</dbReference>
<dbReference type="SMR" id="Q28479"/>
<dbReference type="STRING" id="9541.ENSMFAP00000015864"/>
<dbReference type="GeneID" id="102129545"/>
<dbReference type="eggNOG" id="KOG0784">
    <property type="taxonomic scope" value="Eukaryota"/>
</dbReference>
<dbReference type="Proteomes" id="UP000233100">
    <property type="component" value="Unplaced"/>
</dbReference>
<dbReference type="GO" id="GO:0005739">
    <property type="term" value="C:mitochondrion"/>
    <property type="evidence" value="ECO:0007669"/>
    <property type="project" value="UniProtKB-SubCell"/>
</dbReference>
<dbReference type="GO" id="GO:0000287">
    <property type="term" value="F:magnesium ion binding"/>
    <property type="evidence" value="ECO:0007669"/>
    <property type="project" value="InterPro"/>
</dbReference>
<dbReference type="GO" id="GO:0051287">
    <property type="term" value="F:NAD binding"/>
    <property type="evidence" value="ECO:0007669"/>
    <property type="project" value="InterPro"/>
</dbReference>
<dbReference type="GO" id="GO:0016616">
    <property type="term" value="F:oxidoreductase activity, acting on the CH-OH group of donors, NAD or NADP as acceptor"/>
    <property type="evidence" value="ECO:0007669"/>
    <property type="project" value="InterPro"/>
</dbReference>
<dbReference type="GO" id="GO:0006102">
    <property type="term" value="P:isocitrate metabolic process"/>
    <property type="evidence" value="ECO:0007669"/>
    <property type="project" value="TreeGrafter"/>
</dbReference>
<dbReference type="GO" id="GO:0006099">
    <property type="term" value="P:tricarboxylic acid cycle"/>
    <property type="evidence" value="ECO:0007669"/>
    <property type="project" value="UniProtKB-KW"/>
</dbReference>
<dbReference type="FunFam" id="3.40.718.10:FF:000001">
    <property type="entry name" value="Isocitrate dehydrogenase [NAD] subunit, mitochondrial"/>
    <property type="match status" value="1"/>
</dbReference>
<dbReference type="Gene3D" id="3.40.718.10">
    <property type="entry name" value="Isopropylmalate Dehydrogenase"/>
    <property type="match status" value="1"/>
</dbReference>
<dbReference type="InterPro" id="IPR019818">
    <property type="entry name" value="IsoCit/isopropylmalate_DH_CS"/>
</dbReference>
<dbReference type="InterPro" id="IPR004434">
    <property type="entry name" value="Isocitrate_DH_NAD"/>
</dbReference>
<dbReference type="InterPro" id="IPR024084">
    <property type="entry name" value="IsoPropMal-DH-like_dom"/>
</dbReference>
<dbReference type="NCBIfam" id="TIGR00175">
    <property type="entry name" value="mito_nad_idh"/>
    <property type="match status" value="1"/>
</dbReference>
<dbReference type="PANTHER" id="PTHR11835">
    <property type="entry name" value="DECARBOXYLATING DEHYDROGENASES-ISOCITRATE, ISOPROPYLMALATE, TARTRATE"/>
    <property type="match status" value="1"/>
</dbReference>
<dbReference type="PANTHER" id="PTHR11835:SF42">
    <property type="entry name" value="ISOCITRATE DEHYDROGENASE [NAD] SUBUNIT BETA, MITOCHONDRIAL"/>
    <property type="match status" value="1"/>
</dbReference>
<dbReference type="Pfam" id="PF00180">
    <property type="entry name" value="Iso_dh"/>
    <property type="match status" value="1"/>
</dbReference>
<dbReference type="SMART" id="SM01329">
    <property type="entry name" value="Iso_dh"/>
    <property type="match status" value="1"/>
</dbReference>
<dbReference type="SUPFAM" id="SSF53659">
    <property type="entry name" value="Isocitrate/Isopropylmalate dehydrogenase-like"/>
    <property type="match status" value="1"/>
</dbReference>
<dbReference type="PROSITE" id="PS00470">
    <property type="entry name" value="IDH_IMDH"/>
    <property type="match status" value="1"/>
</dbReference>
<evidence type="ECO:0000250" key="1"/>
<evidence type="ECO:0000250" key="2">
    <source>
        <dbReference type="UniProtKB" id="O43837"/>
    </source>
</evidence>
<evidence type="ECO:0000305" key="3"/>